<protein>
    <recommendedName>
        <fullName>Homing endonuclease I-ApeII</fullName>
        <ecNumber>3.1.-.-</ecNumber>
    </recommendedName>
    <alternativeName>
        <fullName>rRNA intron-encoded homing endonuclease 2</fullName>
    </alternativeName>
</protein>
<feature type="chain" id="PRO_0000192790" description="Homing endonuclease I-ApeII">
    <location>
        <begin position="1"/>
        <end position="167"/>
    </location>
</feature>
<organism>
    <name type="scientific">Aeropyrum pernix (strain ATCC 700893 / DSM 11879 / JCM 9820 / NBRC 100138 / K1)</name>
    <dbReference type="NCBI Taxonomy" id="272557"/>
    <lineage>
        <taxon>Archaea</taxon>
        <taxon>Thermoproteota</taxon>
        <taxon>Thermoprotei</taxon>
        <taxon>Desulfurococcales</taxon>
        <taxon>Desulfurococcaceae</taxon>
        <taxon>Aeropyrum</taxon>
    </lineage>
</organism>
<evidence type="ECO:0000305" key="1"/>
<proteinExistence type="inferred from homology"/>
<reference key="1">
    <citation type="journal article" date="1998" name="J. Bacteriol.">
        <title>Molecular characterization and postsplicing fate of three introns within the single rRNA operon of the hyperthermophilic archaeon Aeropyrum pernix K1.</title>
        <authorList>
            <person name="Nomura N."/>
            <person name="Sako Y."/>
            <person name="Uchida A."/>
        </authorList>
    </citation>
    <scope>NUCLEOTIDE SEQUENCE [GENOMIC DNA]</scope>
    <source>
        <strain>ATCC 700893 / DSM 11879 / JCM 9820 / NBRC 100138 / K1</strain>
    </source>
</reference>
<reference key="2">
    <citation type="submission" date="2005-06" db="EMBL/GenBank/DDBJ databases">
        <authorList>
            <person name="Nomura N."/>
        </authorList>
    </citation>
    <scope>SEQUENCE REVISION</scope>
</reference>
<reference key="3">
    <citation type="journal article" date="1999" name="DNA Res.">
        <title>Complete genome sequence of an aerobic hyper-thermophilic crenarchaeon, Aeropyrum pernix K1.</title>
        <authorList>
            <person name="Kawarabayasi Y."/>
            <person name="Hino Y."/>
            <person name="Horikawa H."/>
            <person name="Yamazaki S."/>
            <person name="Haikawa Y."/>
            <person name="Jin-no K."/>
            <person name="Takahashi M."/>
            <person name="Sekine M."/>
            <person name="Baba S."/>
            <person name="Ankai A."/>
            <person name="Kosugi H."/>
            <person name="Hosoyama A."/>
            <person name="Fukui S."/>
            <person name="Nagai Y."/>
            <person name="Nishijima K."/>
            <person name="Nakazawa H."/>
            <person name="Takamiya M."/>
            <person name="Masuda S."/>
            <person name="Funahashi T."/>
            <person name="Tanaka T."/>
            <person name="Kudoh Y."/>
            <person name="Yamazaki J."/>
            <person name="Kushida N."/>
            <person name="Oguchi A."/>
            <person name="Aoki K."/>
            <person name="Kubota K."/>
            <person name="Nakamura Y."/>
            <person name="Nomura N."/>
            <person name="Sako Y."/>
            <person name="Kikuchi H."/>
        </authorList>
    </citation>
    <scope>NUCLEOTIDE SEQUENCE [LARGE SCALE GENOMIC DNA]</scope>
    <source>
        <strain>ATCC 700893 / DSM 11879 / JCM 9820 / NBRC 100138 / K1</strain>
    </source>
</reference>
<comment type="function">
    <text>Endonuclease involved in rRNA intron I-gamma homing.</text>
</comment>
<comment type="similarity">
    <text evidence="1">Belongs to the LAGLIDADG endonuclease family.</text>
</comment>
<keyword id="KW-0255">Endonuclease</keyword>
<keyword id="KW-0378">Hydrolase</keyword>
<keyword id="KW-0404">Intron homing</keyword>
<keyword id="KW-0540">Nuclease</keyword>
<keyword id="KW-1185">Reference proteome</keyword>
<sequence length="167" mass="19141">MDQCLLEGYVAGIIDAEASLSVSIKIQEDLRCRVRVDPVFSITQDSKDVLNVVKNYFGCGRLMPKPGQEHLTLYVVDRLEALADCLIPKLDRLPLIVKKRGFEMFREIVLTLTRMKYRRVECCVIRDLVLKSYSLSSLNKKSKRKRSLEEILKIIPCDKAVEPPGER</sequence>
<gene>
    <name type="primary">apeII</name>
    <name type="ordered locus">APE_1921</name>
</gene>
<accession>O73943</accession>
<accession>Q9YAM2</accession>
<name>APE2_AERPE</name>
<dbReference type="EC" id="3.1.-.-"/>
<dbReference type="EMBL" id="AB008745">
    <property type="protein sequence ID" value="BAA31988.2"/>
    <property type="molecule type" value="Genomic_DNA"/>
</dbReference>
<dbReference type="EMBL" id="BA000002">
    <property type="protein sequence ID" value="BAA80926.1"/>
    <property type="molecule type" value="Genomic_DNA"/>
</dbReference>
<dbReference type="PIR" id="A72580">
    <property type="entry name" value="A72580"/>
</dbReference>
<dbReference type="SMR" id="O73943"/>
<dbReference type="EnsemblBacteria" id="BAA80926">
    <property type="protein sequence ID" value="BAA80926"/>
    <property type="gene ID" value="APE_1921"/>
</dbReference>
<dbReference type="KEGG" id="ape:APE_1921"/>
<dbReference type="eggNOG" id="arCOG08947">
    <property type="taxonomic scope" value="Archaea"/>
</dbReference>
<dbReference type="Proteomes" id="UP000002518">
    <property type="component" value="Chromosome"/>
</dbReference>
<dbReference type="GO" id="GO:0004519">
    <property type="term" value="F:endonuclease activity"/>
    <property type="evidence" value="ECO:0007669"/>
    <property type="project" value="UniProtKB-KW"/>
</dbReference>
<dbReference type="GO" id="GO:0006314">
    <property type="term" value="P:intron homing"/>
    <property type="evidence" value="ECO:0007669"/>
    <property type="project" value="UniProtKB-KW"/>
</dbReference>
<dbReference type="Gene3D" id="3.10.28.10">
    <property type="entry name" value="Homing endonucleases"/>
    <property type="match status" value="1"/>
</dbReference>
<dbReference type="InterPro" id="IPR027434">
    <property type="entry name" value="Homing_endonucl"/>
</dbReference>
<dbReference type="InterPro" id="IPR004860">
    <property type="entry name" value="LAGLIDADG_dom"/>
</dbReference>
<dbReference type="InterPro" id="IPR051289">
    <property type="entry name" value="LAGLIDADG_Endonuclease"/>
</dbReference>
<dbReference type="PANTHER" id="PTHR36181">
    <property type="entry name" value="INTRON-ENCODED ENDONUCLEASE AI3-RELATED"/>
    <property type="match status" value="1"/>
</dbReference>
<dbReference type="PANTHER" id="PTHR36181:SF2">
    <property type="entry name" value="INTRON-ENCODED ENDONUCLEASE AI3-RELATED"/>
    <property type="match status" value="1"/>
</dbReference>
<dbReference type="Pfam" id="PF00961">
    <property type="entry name" value="LAGLIDADG_1"/>
    <property type="match status" value="1"/>
</dbReference>
<dbReference type="SUPFAM" id="SSF55608">
    <property type="entry name" value="Homing endonucleases"/>
    <property type="match status" value="1"/>
</dbReference>